<feature type="chain" id="PRO_1000045506" description="DNA primase small subunit PriS">
    <location>
        <begin position="1"/>
        <end position="324"/>
    </location>
</feature>
<feature type="active site" evidence="1">
    <location>
        <position position="94"/>
    </location>
</feature>
<feature type="active site" evidence="1">
    <location>
        <position position="96"/>
    </location>
</feature>
<feature type="active site" evidence="1">
    <location>
        <position position="274"/>
    </location>
</feature>
<dbReference type="EC" id="2.7.7.-" evidence="1"/>
<dbReference type="EMBL" id="CP000678">
    <property type="protein sequence ID" value="ABQ86280.1"/>
    <property type="molecule type" value="Genomic_DNA"/>
</dbReference>
<dbReference type="RefSeq" id="WP_011953664.1">
    <property type="nucleotide sequence ID" value="NZ_CP117965.1"/>
</dbReference>
<dbReference type="SMR" id="A5UJA2"/>
<dbReference type="STRING" id="420247.Msm_0075"/>
<dbReference type="EnsemblBacteria" id="ABQ86280">
    <property type="protein sequence ID" value="ABQ86280"/>
    <property type="gene ID" value="Msm_0075"/>
</dbReference>
<dbReference type="GeneID" id="78816699"/>
<dbReference type="KEGG" id="msi:Msm_0075"/>
<dbReference type="PATRIC" id="fig|420247.28.peg.78"/>
<dbReference type="eggNOG" id="arCOG04110">
    <property type="taxonomic scope" value="Archaea"/>
</dbReference>
<dbReference type="HOGENOM" id="CLU_056123_1_0_2"/>
<dbReference type="Proteomes" id="UP000001992">
    <property type="component" value="Chromosome"/>
</dbReference>
<dbReference type="GO" id="GO:0000428">
    <property type="term" value="C:DNA-directed RNA polymerase complex"/>
    <property type="evidence" value="ECO:0007669"/>
    <property type="project" value="UniProtKB-KW"/>
</dbReference>
<dbReference type="GO" id="GO:1990077">
    <property type="term" value="C:primosome complex"/>
    <property type="evidence" value="ECO:0007669"/>
    <property type="project" value="UniProtKB-KW"/>
</dbReference>
<dbReference type="GO" id="GO:0003899">
    <property type="term" value="F:DNA-directed RNA polymerase activity"/>
    <property type="evidence" value="ECO:0007669"/>
    <property type="project" value="InterPro"/>
</dbReference>
<dbReference type="GO" id="GO:0046872">
    <property type="term" value="F:metal ion binding"/>
    <property type="evidence" value="ECO:0007669"/>
    <property type="project" value="UniProtKB-KW"/>
</dbReference>
<dbReference type="GO" id="GO:0006269">
    <property type="term" value="P:DNA replication, synthesis of primer"/>
    <property type="evidence" value="ECO:0007669"/>
    <property type="project" value="UniProtKB-UniRule"/>
</dbReference>
<dbReference type="Gene3D" id="1.10.8.160">
    <property type="entry name" value="DNA primase S, domain 2"/>
    <property type="match status" value="1"/>
</dbReference>
<dbReference type="Gene3D" id="3.90.920.10">
    <property type="entry name" value="DNA primase, PRIM domain"/>
    <property type="match status" value="1"/>
</dbReference>
<dbReference type="HAMAP" id="MF_00700">
    <property type="entry name" value="DNA_primase_sml_arc"/>
    <property type="match status" value="1"/>
</dbReference>
<dbReference type="InterPro" id="IPR002755">
    <property type="entry name" value="DNA_primase_S"/>
</dbReference>
<dbReference type="InterPro" id="IPR014052">
    <property type="entry name" value="DNA_primase_ssu_euk/arc"/>
</dbReference>
<dbReference type="InterPro" id="IPR023639">
    <property type="entry name" value="DNA_primase_ssu_PriS"/>
</dbReference>
<dbReference type="NCBIfam" id="TIGR00335">
    <property type="entry name" value="primase_sml"/>
    <property type="match status" value="1"/>
</dbReference>
<dbReference type="PANTHER" id="PTHR10536">
    <property type="entry name" value="DNA PRIMASE SMALL SUBUNIT"/>
    <property type="match status" value="1"/>
</dbReference>
<dbReference type="Pfam" id="PF01896">
    <property type="entry name" value="DNA_primase_S"/>
    <property type="match status" value="1"/>
</dbReference>
<dbReference type="SUPFAM" id="SSF56747">
    <property type="entry name" value="Prim-pol domain"/>
    <property type="match status" value="1"/>
</dbReference>
<organism>
    <name type="scientific">Methanobrevibacter smithii (strain ATCC 35061 / DSM 861 / OCM 144 / PS)</name>
    <dbReference type="NCBI Taxonomy" id="420247"/>
    <lineage>
        <taxon>Archaea</taxon>
        <taxon>Methanobacteriati</taxon>
        <taxon>Methanobacteriota</taxon>
        <taxon>Methanomada group</taxon>
        <taxon>Methanobacteria</taxon>
        <taxon>Methanobacteriales</taxon>
        <taxon>Methanobacteriaceae</taxon>
        <taxon>Methanobrevibacter</taxon>
    </lineage>
</organism>
<comment type="function">
    <text evidence="1">Catalytic subunit of DNA primase, an RNA polymerase that catalyzes the synthesis of short RNA molecules used as primers for DNA polymerase during DNA replication. The small subunit contains the primase catalytic core and has DNA synthesis activity on its own. Binding to the large subunit stabilizes and modulates the activity, increasing the rate of DNA synthesis while decreasing the length of the DNA fragments, and conferring RNA synthesis capability. The DNA polymerase activity may enable DNA primase to also catalyze primer extension after primer synthesis. May also play a role in DNA repair.</text>
</comment>
<comment type="cofactor">
    <cofactor evidence="1">
        <name>Mg(2+)</name>
        <dbReference type="ChEBI" id="CHEBI:18420"/>
    </cofactor>
    <cofactor evidence="1">
        <name>Mn(2+)</name>
        <dbReference type="ChEBI" id="CHEBI:29035"/>
    </cofactor>
</comment>
<comment type="subunit">
    <text evidence="1">Heterodimer of a small subunit (PriS) and a large subunit (PriL).</text>
</comment>
<comment type="similarity">
    <text evidence="1">Belongs to the eukaryotic-type primase small subunit family.</text>
</comment>
<evidence type="ECO:0000255" key="1">
    <source>
        <dbReference type="HAMAP-Rule" id="MF_00700"/>
    </source>
</evidence>
<name>PRIS_METS3</name>
<gene>
    <name evidence="1" type="primary">priS</name>
    <name type="synonym">priA</name>
    <name type="ordered locus">Msm_0075</name>
</gene>
<accession>A5UJA2</accession>
<sequence length="324" mass="37939">MFSKATLKERRQYYREEWSTKDMPDFILKDLKKREFGFDHNGKGPNDRYKVFRGSESLKKFLRYKAPFAAYISVAFYNNPRRREDWQKAEYIFDVDAKDIPIRSCQCDGVCEVCLGQALEIVNSLIDTLQDDLGLNNIHLVYSGRGYHIRILDEEMMTSGSELRSEVLKYVAGAEVPKSNFFNPDISNKSFNFEHFSIPVGYSKIFTDKLKYNIQHLVGNEELDEINPKLMKDIIKYRHHLDNDNWGYFKRDIGPRRYKNLTEAMARVNLSTIDAKVSIDLKRILRLPSSLHSKVSMKCMEVKNRETFDPLQEAVPKFVEERGE</sequence>
<proteinExistence type="inferred from homology"/>
<reference key="1">
    <citation type="journal article" date="2007" name="Proc. Natl. Acad. Sci. U.S.A.">
        <title>Genomic and metabolic adaptations of Methanobrevibacter smithii to the human gut.</title>
        <authorList>
            <person name="Samuel B.S."/>
            <person name="Hansen E.E."/>
            <person name="Manchester J.K."/>
            <person name="Coutinho P.M."/>
            <person name="Henrissat B."/>
            <person name="Fulton R."/>
            <person name="Latreille P."/>
            <person name="Kim K."/>
            <person name="Wilson R.K."/>
            <person name="Gordon J.I."/>
        </authorList>
    </citation>
    <scope>NUCLEOTIDE SEQUENCE [LARGE SCALE GENOMIC DNA]</scope>
    <source>
        <strain>ATCC 35061 / DSM 861 / OCM 144 / PS</strain>
    </source>
</reference>
<keyword id="KW-0235">DNA replication</keyword>
<keyword id="KW-0240">DNA-directed RNA polymerase</keyword>
<keyword id="KW-0460">Magnesium</keyword>
<keyword id="KW-0464">Manganese</keyword>
<keyword id="KW-0479">Metal-binding</keyword>
<keyword id="KW-0548">Nucleotidyltransferase</keyword>
<keyword id="KW-0639">Primosome</keyword>
<keyword id="KW-0804">Transcription</keyword>
<keyword id="KW-0808">Transferase</keyword>
<protein>
    <recommendedName>
        <fullName evidence="1">DNA primase small subunit PriS</fullName>
        <ecNumber evidence="1">2.7.7.-</ecNumber>
    </recommendedName>
</protein>